<name>ACCD_BART1</name>
<organism>
    <name type="scientific">Bartonella tribocorum (strain CIP 105476 / IBS 506)</name>
    <dbReference type="NCBI Taxonomy" id="382640"/>
    <lineage>
        <taxon>Bacteria</taxon>
        <taxon>Pseudomonadati</taxon>
        <taxon>Pseudomonadota</taxon>
        <taxon>Alphaproteobacteria</taxon>
        <taxon>Hyphomicrobiales</taxon>
        <taxon>Bartonellaceae</taxon>
        <taxon>Bartonella</taxon>
    </lineage>
</organism>
<dbReference type="EC" id="2.1.3.15" evidence="1"/>
<dbReference type="EMBL" id="AM260525">
    <property type="protein sequence ID" value="CAK00539.1"/>
    <property type="molecule type" value="Genomic_DNA"/>
</dbReference>
<dbReference type="RefSeq" id="WP_012230319.1">
    <property type="nucleotide sequence ID" value="NC_010161.1"/>
</dbReference>
<dbReference type="SMR" id="A9IL94"/>
<dbReference type="KEGG" id="btr:BT_0035"/>
<dbReference type="eggNOG" id="COG0777">
    <property type="taxonomic scope" value="Bacteria"/>
</dbReference>
<dbReference type="HOGENOM" id="CLU_015486_1_0_5"/>
<dbReference type="UniPathway" id="UPA00655">
    <property type="reaction ID" value="UER00711"/>
</dbReference>
<dbReference type="Proteomes" id="UP000001592">
    <property type="component" value="Chromosome"/>
</dbReference>
<dbReference type="GO" id="GO:0009329">
    <property type="term" value="C:acetate CoA-transferase complex"/>
    <property type="evidence" value="ECO:0007669"/>
    <property type="project" value="TreeGrafter"/>
</dbReference>
<dbReference type="GO" id="GO:0003989">
    <property type="term" value="F:acetyl-CoA carboxylase activity"/>
    <property type="evidence" value="ECO:0007669"/>
    <property type="project" value="InterPro"/>
</dbReference>
<dbReference type="GO" id="GO:0005524">
    <property type="term" value="F:ATP binding"/>
    <property type="evidence" value="ECO:0007669"/>
    <property type="project" value="UniProtKB-KW"/>
</dbReference>
<dbReference type="GO" id="GO:0016743">
    <property type="term" value="F:carboxyl- or carbamoyltransferase activity"/>
    <property type="evidence" value="ECO:0007669"/>
    <property type="project" value="UniProtKB-UniRule"/>
</dbReference>
<dbReference type="GO" id="GO:0006633">
    <property type="term" value="P:fatty acid biosynthetic process"/>
    <property type="evidence" value="ECO:0007669"/>
    <property type="project" value="UniProtKB-KW"/>
</dbReference>
<dbReference type="GO" id="GO:2001295">
    <property type="term" value="P:malonyl-CoA biosynthetic process"/>
    <property type="evidence" value="ECO:0007669"/>
    <property type="project" value="UniProtKB-UniRule"/>
</dbReference>
<dbReference type="Gene3D" id="3.90.226.10">
    <property type="entry name" value="2-enoyl-CoA Hydratase, Chain A, domain 1"/>
    <property type="match status" value="1"/>
</dbReference>
<dbReference type="HAMAP" id="MF_01395">
    <property type="entry name" value="AcetylCoA_CT_beta"/>
    <property type="match status" value="1"/>
</dbReference>
<dbReference type="InterPro" id="IPR034733">
    <property type="entry name" value="AcCoA_carboxyl_beta"/>
</dbReference>
<dbReference type="InterPro" id="IPR000438">
    <property type="entry name" value="Acetyl_CoA_COase_Trfase_b_su"/>
</dbReference>
<dbReference type="InterPro" id="IPR029045">
    <property type="entry name" value="ClpP/crotonase-like_dom_sf"/>
</dbReference>
<dbReference type="InterPro" id="IPR011762">
    <property type="entry name" value="COA_CT_N"/>
</dbReference>
<dbReference type="NCBIfam" id="TIGR00515">
    <property type="entry name" value="accD"/>
    <property type="match status" value="1"/>
</dbReference>
<dbReference type="PANTHER" id="PTHR42995">
    <property type="entry name" value="ACETYL-COENZYME A CARBOXYLASE CARBOXYL TRANSFERASE SUBUNIT BETA, CHLOROPLASTIC"/>
    <property type="match status" value="1"/>
</dbReference>
<dbReference type="PANTHER" id="PTHR42995:SF5">
    <property type="entry name" value="ACETYL-COENZYME A CARBOXYLASE CARBOXYL TRANSFERASE SUBUNIT BETA, CHLOROPLASTIC"/>
    <property type="match status" value="1"/>
</dbReference>
<dbReference type="Pfam" id="PF01039">
    <property type="entry name" value="Carboxyl_trans"/>
    <property type="match status" value="1"/>
</dbReference>
<dbReference type="PRINTS" id="PR01070">
    <property type="entry name" value="ACCCTRFRASEB"/>
</dbReference>
<dbReference type="SUPFAM" id="SSF52096">
    <property type="entry name" value="ClpP/crotonase"/>
    <property type="match status" value="1"/>
</dbReference>
<dbReference type="PROSITE" id="PS50980">
    <property type="entry name" value="COA_CT_NTER"/>
    <property type="match status" value="1"/>
</dbReference>
<accession>A9IL94</accession>
<comment type="function">
    <text evidence="1">Component of the acetyl coenzyme A carboxylase (ACC) complex. Biotin carboxylase (BC) catalyzes the carboxylation of biotin on its carrier protein (BCCP) and then the CO(2) group is transferred by the transcarboxylase to acetyl-CoA to form malonyl-CoA.</text>
</comment>
<comment type="catalytic activity">
    <reaction evidence="1">
        <text>N(6)-carboxybiotinyl-L-lysyl-[protein] + acetyl-CoA = N(6)-biotinyl-L-lysyl-[protein] + malonyl-CoA</text>
        <dbReference type="Rhea" id="RHEA:54728"/>
        <dbReference type="Rhea" id="RHEA-COMP:10505"/>
        <dbReference type="Rhea" id="RHEA-COMP:10506"/>
        <dbReference type="ChEBI" id="CHEBI:57288"/>
        <dbReference type="ChEBI" id="CHEBI:57384"/>
        <dbReference type="ChEBI" id="CHEBI:83144"/>
        <dbReference type="ChEBI" id="CHEBI:83145"/>
        <dbReference type="EC" id="2.1.3.15"/>
    </reaction>
</comment>
<comment type="pathway">
    <text evidence="1">Lipid metabolism; malonyl-CoA biosynthesis; malonyl-CoA from acetyl-CoA: step 1/1.</text>
</comment>
<comment type="subunit">
    <text evidence="1">Acetyl-CoA carboxylase is a heterohexamer composed of biotin carboxyl carrier protein (AccB), biotin carboxylase (AccC) and two subunits each of ACCase subunit alpha (AccA) and ACCase subunit beta (AccD).</text>
</comment>
<comment type="subcellular location">
    <subcellularLocation>
        <location evidence="1">Cytoplasm</location>
    </subcellularLocation>
</comment>
<comment type="similarity">
    <text evidence="1">Belongs to the AccD/PCCB family.</text>
</comment>
<feature type="chain" id="PRO_0000389694" description="Acetyl-coenzyme A carboxylase carboxyl transferase subunit beta">
    <location>
        <begin position="1"/>
        <end position="306"/>
    </location>
</feature>
<feature type="domain" description="CoA carboxyltransferase N-terminal" evidence="2">
    <location>
        <begin position="25"/>
        <end position="294"/>
    </location>
</feature>
<feature type="region of interest" description="Disordered" evidence="3">
    <location>
        <begin position="284"/>
        <end position="306"/>
    </location>
</feature>
<protein>
    <recommendedName>
        <fullName evidence="1">Acetyl-coenzyme A carboxylase carboxyl transferase subunit beta</fullName>
        <shortName evidence="1">ACCase subunit beta</shortName>
        <shortName evidence="1">Acetyl-CoA carboxylase carboxyltransferase subunit beta</shortName>
        <ecNumber evidence="1">2.1.3.15</ecNumber>
    </recommendedName>
</protein>
<evidence type="ECO:0000255" key="1">
    <source>
        <dbReference type="HAMAP-Rule" id="MF_01395"/>
    </source>
</evidence>
<evidence type="ECO:0000255" key="2">
    <source>
        <dbReference type="PROSITE-ProRule" id="PRU01136"/>
    </source>
</evidence>
<evidence type="ECO:0000256" key="3">
    <source>
        <dbReference type="SAM" id="MobiDB-lite"/>
    </source>
</evidence>
<reference key="1">
    <citation type="journal article" date="2007" name="Nat. Genet.">
        <title>Genomic analysis of Bartonella identifies type IV secretion systems as host adaptability factors.</title>
        <authorList>
            <person name="Saenz H.L."/>
            <person name="Engel P."/>
            <person name="Stoeckli M.C."/>
            <person name="Lanz C."/>
            <person name="Raddatz G."/>
            <person name="Vayssier-Taussat M."/>
            <person name="Birtles R."/>
            <person name="Schuster S.C."/>
            <person name="Dehio C."/>
        </authorList>
    </citation>
    <scope>NUCLEOTIDE SEQUENCE [LARGE SCALE GENOMIC DNA]</scope>
    <source>
        <strain>CIP 105476 / IBS 506</strain>
    </source>
</reference>
<keyword id="KW-0067">ATP-binding</keyword>
<keyword id="KW-0963">Cytoplasm</keyword>
<keyword id="KW-0275">Fatty acid biosynthesis</keyword>
<keyword id="KW-0276">Fatty acid metabolism</keyword>
<keyword id="KW-0444">Lipid biosynthesis</keyword>
<keyword id="KW-0443">Lipid metabolism</keyword>
<keyword id="KW-0547">Nucleotide-binding</keyword>
<keyword id="KW-0808">Transferase</keyword>
<sequence length="306" mass="33778">MNWITNYVRPKINSILGRREIPENLWIKDPTSGEMIFHKDLEANQFVAPNSGYHMRISAKNRLVHFFDDGVYTALENPKVVTDPLKFRDEKRYIDRLKDYRSKLGVDDNILSARGTIEGLPIIATVQDFAFMGGSLGMASGEAIVKAFDTAIAEKCPLVLFAASGGARMQEGTLSLMQMPRTTVAIEMLKEAKLPYIVVLTNPTTGGVTASYAMLGDIHIAEPGAMIGFAGPRVIQQTIRETLPEGFQSSEYLLEHGMIDMVVSRLEMKTTIARLLRLMMKRPAVVTPSPPSPTDSQTSLSKTKAA</sequence>
<proteinExistence type="inferred from homology"/>
<gene>
    <name evidence="1" type="primary">accD</name>
    <name type="ordered locus">BT_0035</name>
</gene>